<proteinExistence type="inferred from homology"/>
<sequence>MAKIDASKLELTEKVVHIARVAKVVKGGRRFSFSALVVVGDGQGNVGAGLGKAGEVPEAIRKGMEDAKKNMVSVPLIGTTIPHAILGNYGAGSVLLKPATKGTGVIAGGAVRAVLEAAGVSDILTKSLGSANPHNMVNATMAALKSLKRAEDVAKLRGKTVEEILG</sequence>
<reference key="1">
    <citation type="journal article" date="2006" name="J. Bacteriol.">
        <title>Complete genome sequence of the dehalorespiring bacterium Desulfitobacterium hafniense Y51 and comparison with Dehalococcoides ethenogenes 195.</title>
        <authorList>
            <person name="Nonaka H."/>
            <person name="Keresztes G."/>
            <person name="Shinoda Y."/>
            <person name="Ikenaga Y."/>
            <person name="Abe M."/>
            <person name="Naito K."/>
            <person name="Inatomi K."/>
            <person name="Furukawa K."/>
            <person name="Inui M."/>
            <person name="Yukawa H."/>
        </authorList>
    </citation>
    <scope>NUCLEOTIDE SEQUENCE [LARGE SCALE GENOMIC DNA]</scope>
    <source>
        <strain>Y51</strain>
    </source>
</reference>
<feature type="chain" id="PRO_0000323117" description="Small ribosomal subunit protein uS5">
    <location>
        <begin position="1"/>
        <end position="166"/>
    </location>
</feature>
<feature type="domain" description="S5 DRBM" evidence="1">
    <location>
        <begin position="11"/>
        <end position="74"/>
    </location>
</feature>
<organism>
    <name type="scientific">Desulfitobacterium hafniense (strain Y51)</name>
    <dbReference type="NCBI Taxonomy" id="138119"/>
    <lineage>
        <taxon>Bacteria</taxon>
        <taxon>Bacillati</taxon>
        <taxon>Bacillota</taxon>
        <taxon>Clostridia</taxon>
        <taxon>Eubacteriales</taxon>
        <taxon>Desulfitobacteriaceae</taxon>
        <taxon>Desulfitobacterium</taxon>
    </lineage>
</organism>
<name>RS5_DESHY</name>
<gene>
    <name evidence="1" type="primary">rpsE</name>
    <name type="ordered locus">DSY0488</name>
</gene>
<evidence type="ECO:0000255" key="1">
    <source>
        <dbReference type="HAMAP-Rule" id="MF_01307"/>
    </source>
</evidence>
<evidence type="ECO:0000305" key="2"/>
<dbReference type="EMBL" id="AP008230">
    <property type="protein sequence ID" value="BAE82277.1"/>
    <property type="molecule type" value="Genomic_DNA"/>
</dbReference>
<dbReference type="RefSeq" id="WP_005810132.1">
    <property type="nucleotide sequence ID" value="NC_007907.1"/>
</dbReference>
<dbReference type="SMR" id="Q250L5"/>
<dbReference type="STRING" id="138119.DSY0488"/>
<dbReference type="KEGG" id="dsy:DSY0488"/>
<dbReference type="eggNOG" id="COG0098">
    <property type="taxonomic scope" value="Bacteria"/>
</dbReference>
<dbReference type="HOGENOM" id="CLU_065898_2_2_9"/>
<dbReference type="Proteomes" id="UP000001946">
    <property type="component" value="Chromosome"/>
</dbReference>
<dbReference type="GO" id="GO:0015935">
    <property type="term" value="C:small ribosomal subunit"/>
    <property type="evidence" value="ECO:0007669"/>
    <property type="project" value="InterPro"/>
</dbReference>
<dbReference type="GO" id="GO:0019843">
    <property type="term" value="F:rRNA binding"/>
    <property type="evidence" value="ECO:0007669"/>
    <property type="project" value="UniProtKB-UniRule"/>
</dbReference>
<dbReference type="GO" id="GO:0003735">
    <property type="term" value="F:structural constituent of ribosome"/>
    <property type="evidence" value="ECO:0007669"/>
    <property type="project" value="InterPro"/>
</dbReference>
<dbReference type="GO" id="GO:0006412">
    <property type="term" value="P:translation"/>
    <property type="evidence" value="ECO:0007669"/>
    <property type="project" value="UniProtKB-UniRule"/>
</dbReference>
<dbReference type="FunFam" id="3.30.160.20:FF:000001">
    <property type="entry name" value="30S ribosomal protein S5"/>
    <property type="match status" value="1"/>
</dbReference>
<dbReference type="FunFam" id="3.30.230.10:FF:000002">
    <property type="entry name" value="30S ribosomal protein S5"/>
    <property type="match status" value="1"/>
</dbReference>
<dbReference type="Gene3D" id="3.30.160.20">
    <property type="match status" value="1"/>
</dbReference>
<dbReference type="Gene3D" id="3.30.230.10">
    <property type="match status" value="1"/>
</dbReference>
<dbReference type="HAMAP" id="MF_01307_B">
    <property type="entry name" value="Ribosomal_uS5_B"/>
    <property type="match status" value="1"/>
</dbReference>
<dbReference type="InterPro" id="IPR020568">
    <property type="entry name" value="Ribosomal_Su5_D2-typ_SF"/>
</dbReference>
<dbReference type="InterPro" id="IPR000851">
    <property type="entry name" value="Ribosomal_uS5"/>
</dbReference>
<dbReference type="InterPro" id="IPR005712">
    <property type="entry name" value="Ribosomal_uS5_bac-type"/>
</dbReference>
<dbReference type="InterPro" id="IPR005324">
    <property type="entry name" value="Ribosomal_uS5_C"/>
</dbReference>
<dbReference type="InterPro" id="IPR013810">
    <property type="entry name" value="Ribosomal_uS5_N"/>
</dbReference>
<dbReference type="InterPro" id="IPR018192">
    <property type="entry name" value="Ribosomal_uS5_N_CS"/>
</dbReference>
<dbReference type="InterPro" id="IPR014721">
    <property type="entry name" value="Ribsml_uS5_D2-typ_fold_subgr"/>
</dbReference>
<dbReference type="NCBIfam" id="TIGR01021">
    <property type="entry name" value="rpsE_bact"/>
    <property type="match status" value="1"/>
</dbReference>
<dbReference type="PANTHER" id="PTHR48277">
    <property type="entry name" value="MITOCHONDRIAL RIBOSOMAL PROTEIN S5"/>
    <property type="match status" value="1"/>
</dbReference>
<dbReference type="PANTHER" id="PTHR48277:SF1">
    <property type="entry name" value="MITOCHONDRIAL RIBOSOMAL PROTEIN S5"/>
    <property type="match status" value="1"/>
</dbReference>
<dbReference type="Pfam" id="PF00333">
    <property type="entry name" value="Ribosomal_S5"/>
    <property type="match status" value="1"/>
</dbReference>
<dbReference type="Pfam" id="PF03719">
    <property type="entry name" value="Ribosomal_S5_C"/>
    <property type="match status" value="1"/>
</dbReference>
<dbReference type="SUPFAM" id="SSF54768">
    <property type="entry name" value="dsRNA-binding domain-like"/>
    <property type="match status" value="1"/>
</dbReference>
<dbReference type="SUPFAM" id="SSF54211">
    <property type="entry name" value="Ribosomal protein S5 domain 2-like"/>
    <property type="match status" value="1"/>
</dbReference>
<dbReference type="PROSITE" id="PS00585">
    <property type="entry name" value="RIBOSOMAL_S5"/>
    <property type="match status" value="1"/>
</dbReference>
<dbReference type="PROSITE" id="PS50881">
    <property type="entry name" value="S5_DSRBD"/>
    <property type="match status" value="1"/>
</dbReference>
<comment type="function">
    <text evidence="1">With S4 and S12 plays an important role in translational accuracy.</text>
</comment>
<comment type="function">
    <text evidence="1">Located at the back of the 30S subunit body where it stabilizes the conformation of the head with respect to the body.</text>
</comment>
<comment type="subunit">
    <text evidence="1">Part of the 30S ribosomal subunit. Contacts proteins S4 and S8.</text>
</comment>
<comment type="domain">
    <text>The N-terminal domain interacts with the head of the 30S subunit; the C-terminal domain interacts with the body and contacts protein S4. The interaction surface between S4 and S5 is involved in control of translational fidelity.</text>
</comment>
<comment type="similarity">
    <text evidence="1">Belongs to the universal ribosomal protein uS5 family.</text>
</comment>
<protein>
    <recommendedName>
        <fullName evidence="1">Small ribosomal subunit protein uS5</fullName>
    </recommendedName>
    <alternativeName>
        <fullName evidence="2">30S ribosomal protein S5</fullName>
    </alternativeName>
</protein>
<accession>Q250L5</accession>
<keyword id="KW-1185">Reference proteome</keyword>
<keyword id="KW-0687">Ribonucleoprotein</keyword>
<keyword id="KW-0689">Ribosomal protein</keyword>
<keyword id="KW-0694">RNA-binding</keyword>
<keyword id="KW-0699">rRNA-binding</keyword>